<proteinExistence type="inferred from homology"/>
<name>FOLD2_GEOMG</name>
<sequence length="285" mass="30179">MSTIIDGKAIAAKLRAEIATEVKILKEKGIIPGLATVLVGEDPASEVYVRMKGNACQELGMHSVKHTLPATTTEAELLALVARLNSDPTIHGILVQLPLPKQINSDTILEAISPVKDVDGFHPYNVGRLMVGKPTFQPCTPYGVMVMLREAGVDLAGKEVVVVGRSNIVGKPVALMCLQQHATVTICHSKTRDLPSKVKEADVVIAAVGVPEMIKGEWIKEGAVVIDVGVNRVGEKKLVGDVEFAAASQRASAITPVPGGVGPMTITMLLYNTLEAAKKTGEGNR</sequence>
<accession>Q39WH4</accession>
<keyword id="KW-0028">Amino-acid biosynthesis</keyword>
<keyword id="KW-0368">Histidine biosynthesis</keyword>
<keyword id="KW-0378">Hydrolase</keyword>
<keyword id="KW-0486">Methionine biosynthesis</keyword>
<keyword id="KW-0511">Multifunctional enzyme</keyword>
<keyword id="KW-0521">NADP</keyword>
<keyword id="KW-0554">One-carbon metabolism</keyword>
<keyword id="KW-0560">Oxidoreductase</keyword>
<keyword id="KW-0658">Purine biosynthesis</keyword>
<keyword id="KW-1185">Reference proteome</keyword>
<dbReference type="EC" id="1.5.1.5" evidence="1"/>
<dbReference type="EC" id="3.5.4.9" evidence="1"/>
<dbReference type="EMBL" id="CP000148">
    <property type="protein sequence ID" value="ABB31400.1"/>
    <property type="molecule type" value="Genomic_DNA"/>
</dbReference>
<dbReference type="SMR" id="Q39WH4"/>
<dbReference type="STRING" id="269799.Gmet_1162"/>
<dbReference type="KEGG" id="gme:Gmet_1162"/>
<dbReference type="eggNOG" id="COG0190">
    <property type="taxonomic scope" value="Bacteria"/>
</dbReference>
<dbReference type="HOGENOM" id="CLU_034045_2_1_7"/>
<dbReference type="UniPathway" id="UPA00193"/>
<dbReference type="Proteomes" id="UP000007073">
    <property type="component" value="Chromosome"/>
</dbReference>
<dbReference type="GO" id="GO:0005829">
    <property type="term" value="C:cytosol"/>
    <property type="evidence" value="ECO:0007669"/>
    <property type="project" value="TreeGrafter"/>
</dbReference>
<dbReference type="GO" id="GO:0004477">
    <property type="term" value="F:methenyltetrahydrofolate cyclohydrolase activity"/>
    <property type="evidence" value="ECO:0007669"/>
    <property type="project" value="UniProtKB-UniRule"/>
</dbReference>
<dbReference type="GO" id="GO:0004488">
    <property type="term" value="F:methylenetetrahydrofolate dehydrogenase (NADP+) activity"/>
    <property type="evidence" value="ECO:0007669"/>
    <property type="project" value="UniProtKB-UniRule"/>
</dbReference>
<dbReference type="GO" id="GO:0000105">
    <property type="term" value="P:L-histidine biosynthetic process"/>
    <property type="evidence" value="ECO:0007669"/>
    <property type="project" value="UniProtKB-KW"/>
</dbReference>
<dbReference type="GO" id="GO:0009086">
    <property type="term" value="P:methionine biosynthetic process"/>
    <property type="evidence" value="ECO:0007669"/>
    <property type="project" value="UniProtKB-KW"/>
</dbReference>
<dbReference type="GO" id="GO:0006164">
    <property type="term" value="P:purine nucleotide biosynthetic process"/>
    <property type="evidence" value="ECO:0007669"/>
    <property type="project" value="UniProtKB-KW"/>
</dbReference>
<dbReference type="GO" id="GO:0035999">
    <property type="term" value="P:tetrahydrofolate interconversion"/>
    <property type="evidence" value="ECO:0007669"/>
    <property type="project" value="UniProtKB-UniRule"/>
</dbReference>
<dbReference type="CDD" id="cd01080">
    <property type="entry name" value="NAD_bind_m-THF_DH_Cyclohyd"/>
    <property type="match status" value="1"/>
</dbReference>
<dbReference type="FunFam" id="3.40.50.10860:FF:000001">
    <property type="entry name" value="Bifunctional protein FolD"/>
    <property type="match status" value="1"/>
</dbReference>
<dbReference type="FunFam" id="3.40.50.720:FF:000094">
    <property type="entry name" value="Bifunctional protein FolD"/>
    <property type="match status" value="1"/>
</dbReference>
<dbReference type="Gene3D" id="3.40.50.10860">
    <property type="entry name" value="Leucine Dehydrogenase, chain A, domain 1"/>
    <property type="match status" value="1"/>
</dbReference>
<dbReference type="Gene3D" id="3.40.50.720">
    <property type="entry name" value="NAD(P)-binding Rossmann-like Domain"/>
    <property type="match status" value="1"/>
</dbReference>
<dbReference type="HAMAP" id="MF_01576">
    <property type="entry name" value="THF_DHG_CYH"/>
    <property type="match status" value="1"/>
</dbReference>
<dbReference type="InterPro" id="IPR046346">
    <property type="entry name" value="Aminoacid_DH-like_N_sf"/>
</dbReference>
<dbReference type="InterPro" id="IPR036291">
    <property type="entry name" value="NAD(P)-bd_dom_sf"/>
</dbReference>
<dbReference type="InterPro" id="IPR000672">
    <property type="entry name" value="THF_DH/CycHdrlase"/>
</dbReference>
<dbReference type="InterPro" id="IPR020630">
    <property type="entry name" value="THF_DH/CycHdrlase_cat_dom"/>
</dbReference>
<dbReference type="InterPro" id="IPR020867">
    <property type="entry name" value="THF_DH/CycHdrlase_CS"/>
</dbReference>
<dbReference type="InterPro" id="IPR020631">
    <property type="entry name" value="THF_DH/CycHdrlase_NAD-bd_dom"/>
</dbReference>
<dbReference type="NCBIfam" id="NF008058">
    <property type="entry name" value="PRK10792.1"/>
    <property type="match status" value="1"/>
</dbReference>
<dbReference type="NCBIfam" id="NF010783">
    <property type="entry name" value="PRK14186.1"/>
    <property type="match status" value="1"/>
</dbReference>
<dbReference type="NCBIfam" id="NF010785">
    <property type="entry name" value="PRK14188.1"/>
    <property type="match status" value="1"/>
</dbReference>
<dbReference type="NCBIfam" id="NF010786">
    <property type="entry name" value="PRK14189.1"/>
    <property type="match status" value="1"/>
</dbReference>
<dbReference type="PANTHER" id="PTHR48099:SF5">
    <property type="entry name" value="C-1-TETRAHYDROFOLATE SYNTHASE, CYTOPLASMIC"/>
    <property type="match status" value="1"/>
</dbReference>
<dbReference type="PANTHER" id="PTHR48099">
    <property type="entry name" value="C-1-TETRAHYDROFOLATE SYNTHASE, CYTOPLASMIC-RELATED"/>
    <property type="match status" value="1"/>
</dbReference>
<dbReference type="Pfam" id="PF00763">
    <property type="entry name" value="THF_DHG_CYH"/>
    <property type="match status" value="1"/>
</dbReference>
<dbReference type="Pfam" id="PF02882">
    <property type="entry name" value="THF_DHG_CYH_C"/>
    <property type="match status" value="1"/>
</dbReference>
<dbReference type="PRINTS" id="PR00085">
    <property type="entry name" value="THFDHDRGNASE"/>
</dbReference>
<dbReference type="SUPFAM" id="SSF53223">
    <property type="entry name" value="Aminoacid dehydrogenase-like, N-terminal domain"/>
    <property type="match status" value="1"/>
</dbReference>
<dbReference type="SUPFAM" id="SSF51735">
    <property type="entry name" value="NAD(P)-binding Rossmann-fold domains"/>
    <property type="match status" value="1"/>
</dbReference>
<dbReference type="PROSITE" id="PS00766">
    <property type="entry name" value="THF_DHG_CYH_1"/>
    <property type="match status" value="1"/>
</dbReference>
<dbReference type="PROSITE" id="PS00767">
    <property type="entry name" value="THF_DHG_CYH_2"/>
    <property type="match status" value="1"/>
</dbReference>
<evidence type="ECO:0000255" key="1">
    <source>
        <dbReference type="HAMAP-Rule" id="MF_01576"/>
    </source>
</evidence>
<comment type="function">
    <text evidence="1">Catalyzes the oxidation of 5,10-methylenetetrahydrofolate to 5,10-methenyltetrahydrofolate and then the hydrolysis of 5,10-methenyltetrahydrofolate to 10-formyltetrahydrofolate.</text>
</comment>
<comment type="catalytic activity">
    <reaction evidence="1">
        <text>(6R)-5,10-methylene-5,6,7,8-tetrahydrofolate + NADP(+) = (6R)-5,10-methenyltetrahydrofolate + NADPH</text>
        <dbReference type="Rhea" id="RHEA:22812"/>
        <dbReference type="ChEBI" id="CHEBI:15636"/>
        <dbReference type="ChEBI" id="CHEBI:57455"/>
        <dbReference type="ChEBI" id="CHEBI:57783"/>
        <dbReference type="ChEBI" id="CHEBI:58349"/>
        <dbReference type="EC" id="1.5.1.5"/>
    </reaction>
</comment>
<comment type="catalytic activity">
    <reaction evidence="1">
        <text>(6R)-5,10-methenyltetrahydrofolate + H2O = (6R)-10-formyltetrahydrofolate + H(+)</text>
        <dbReference type="Rhea" id="RHEA:23700"/>
        <dbReference type="ChEBI" id="CHEBI:15377"/>
        <dbReference type="ChEBI" id="CHEBI:15378"/>
        <dbReference type="ChEBI" id="CHEBI:57455"/>
        <dbReference type="ChEBI" id="CHEBI:195366"/>
        <dbReference type="EC" id="3.5.4.9"/>
    </reaction>
</comment>
<comment type="pathway">
    <text evidence="1">One-carbon metabolism; tetrahydrofolate interconversion.</text>
</comment>
<comment type="subunit">
    <text evidence="1">Homodimer.</text>
</comment>
<comment type="similarity">
    <text evidence="1">Belongs to the tetrahydrofolate dehydrogenase/cyclohydrolase family.</text>
</comment>
<feature type="chain" id="PRO_0000268359" description="Bifunctional protein FolD 2">
    <location>
        <begin position="1"/>
        <end position="285"/>
    </location>
</feature>
<feature type="binding site" evidence="1">
    <location>
        <begin position="164"/>
        <end position="166"/>
    </location>
    <ligand>
        <name>NADP(+)</name>
        <dbReference type="ChEBI" id="CHEBI:58349"/>
    </ligand>
</feature>
<feature type="binding site" evidence="1">
    <location>
        <position position="189"/>
    </location>
    <ligand>
        <name>NADP(+)</name>
        <dbReference type="ChEBI" id="CHEBI:58349"/>
    </ligand>
</feature>
<feature type="binding site" evidence="1">
    <location>
        <position position="230"/>
    </location>
    <ligand>
        <name>NADP(+)</name>
        <dbReference type="ChEBI" id="CHEBI:58349"/>
    </ligand>
</feature>
<protein>
    <recommendedName>
        <fullName evidence="1">Bifunctional protein FolD 2</fullName>
    </recommendedName>
    <domain>
        <recommendedName>
            <fullName evidence="1">Methylenetetrahydrofolate dehydrogenase</fullName>
            <ecNumber evidence="1">1.5.1.5</ecNumber>
        </recommendedName>
    </domain>
    <domain>
        <recommendedName>
            <fullName evidence="1">Methenyltetrahydrofolate cyclohydrolase</fullName>
            <ecNumber evidence="1">3.5.4.9</ecNumber>
        </recommendedName>
    </domain>
</protein>
<organism>
    <name type="scientific">Geobacter metallireducens (strain ATCC 53774 / DSM 7210 / GS-15)</name>
    <dbReference type="NCBI Taxonomy" id="269799"/>
    <lineage>
        <taxon>Bacteria</taxon>
        <taxon>Pseudomonadati</taxon>
        <taxon>Thermodesulfobacteriota</taxon>
        <taxon>Desulfuromonadia</taxon>
        <taxon>Geobacterales</taxon>
        <taxon>Geobacteraceae</taxon>
        <taxon>Geobacter</taxon>
    </lineage>
</organism>
<reference key="1">
    <citation type="journal article" date="2009" name="BMC Microbiol.">
        <title>The genome sequence of Geobacter metallireducens: features of metabolism, physiology and regulation common and dissimilar to Geobacter sulfurreducens.</title>
        <authorList>
            <person name="Aklujkar M."/>
            <person name="Krushkal J."/>
            <person name="DiBartolo G."/>
            <person name="Lapidus A."/>
            <person name="Land M.L."/>
            <person name="Lovley D.R."/>
        </authorList>
    </citation>
    <scope>NUCLEOTIDE SEQUENCE [LARGE SCALE GENOMIC DNA]</scope>
    <source>
        <strain>ATCC 53774 / DSM 7210 / GS-15</strain>
    </source>
</reference>
<gene>
    <name evidence="1" type="primary">folD2</name>
    <name type="ordered locus">Gmet_1162</name>
</gene>